<organism>
    <name type="scientific">Ophiophagus hannah</name>
    <name type="common">King cobra</name>
    <name type="synonym">Naja hannah</name>
    <dbReference type="NCBI Taxonomy" id="8665"/>
    <lineage>
        <taxon>Eukaryota</taxon>
        <taxon>Metazoa</taxon>
        <taxon>Chordata</taxon>
        <taxon>Craniata</taxon>
        <taxon>Vertebrata</taxon>
        <taxon>Euteleostomi</taxon>
        <taxon>Lepidosauria</taxon>
        <taxon>Squamata</taxon>
        <taxon>Bifurcata</taxon>
        <taxon>Unidentata</taxon>
        <taxon>Episquamata</taxon>
        <taxon>Toxicofera</taxon>
        <taxon>Serpentes</taxon>
        <taxon>Colubroidea</taxon>
        <taxon>Elapidae</taxon>
        <taxon>Elapinae</taxon>
        <taxon>Ophiophagus</taxon>
    </lineage>
</organism>
<dbReference type="EMBL" id="EU622894">
    <property type="protein sequence ID" value="ACF21002.1"/>
    <property type="molecule type" value="mRNA"/>
</dbReference>
<dbReference type="SMR" id="B6S2X2"/>
<dbReference type="GO" id="GO:0005615">
    <property type="term" value="C:extracellular space"/>
    <property type="evidence" value="ECO:0007669"/>
    <property type="project" value="TreeGrafter"/>
</dbReference>
<dbReference type="GO" id="GO:0016020">
    <property type="term" value="C:membrane"/>
    <property type="evidence" value="ECO:0007669"/>
    <property type="project" value="UniProtKB-KW"/>
</dbReference>
<dbReference type="GO" id="GO:0044218">
    <property type="term" value="C:other organism cell membrane"/>
    <property type="evidence" value="ECO:0007669"/>
    <property type="project" value="UniProtKB-KW"/>
</dbReference>
<dbReference type="GO" id="GO:0042742">
    <property type="term" value="P:defense response to bacterium"/>
    <property type="evidence" value="ECO:0000250"/>
    <property type="project" value="UniProtKB"/>
</dbReference>
<dbReference type="GO" id="GO:0050832">
    <property type="term" value="P:defense response to fungus"/>
    <property type="evidence" value="ECO:0000250"/>
    <property type="project" value="UniProtKB"/>
</dbReference>
<dbReference type="GO" id="GO:0045087">
    <property type="term" value="P:innate immune response"/>
    <property type="evidence" value="ECO:0000303"/>
    <property type="project" value="UniProtKB"/>
</dbReference>
<dbReference type="GO" id="GO:0031640">
    <property type="term" value="P:killing of cells of another organism"/>
    <property type="evidence" value="ECO:0000250"/>
    <property type="project" value="UniProtKB"/>
</dbReference>
<dbReference type="FunFam" id="3.10.450.10:FF:000034">
    <property type="entry name" value="Cathelicidin-related peptide Oh-Cath"/>
    <property type="match status" value="1"/>
</dbReference>
<dbReference type="Gene3D" id="3.10.450.10">
    <property type="match status" value="1"/>
</dbReference>
<dbReference type="InterPro" id="IPR001894">
    <property type="entry name" value="Cathelicidin-like"/>
</dbReference>
<dbReference type="InterPro" id="IPR046350">
    <property type="entry name" value="Cystatin_sf"/>
</dbReference>
<dbReference type="PANTHER" id="PTHR10206">
    <property type="entry name" value="CATHELICIDIN"/>
    <property type="match status" value="1"/>
</dbReference>
<dbReference type="PANTHER" id="PTHR10206:SF4">
    <property type="entry name" value="NEUTROPHILIC GRANULE PROTEIN"/>
    <property type="match status" value="1"/>
</dbReference>
<dbReference type="Pfam" id="PF00666">
    <property type="entry name" value="Cathelicidins"/>
    <property type="match status" value="1"/>
</dbReference>
<dbReference type="SUPFAM" id="SSF54403">
    <property type="entry name" value="Cystatin/monellin"/>
    <property type="match status" value="1"/>
</dbReference>
<protein>
    <recommendedName>
        <fullName evidence="6">Cathelicidin-related peptide Oh-Cath</fullName>
    </recommendedName>
    <alternativeName>
        <fullName evidence="7">Cathelicidin-related antimicrobial peptide</fullName>
        <shortName evidence="7">Oh_CRAMP</shortName>
    </alternativeName>
    <alternativeName>
        <fullName evidence="7">Vipericidin</fullName>
    </alternativeName>
</protein>
<name>CAMP_OPHHA</name>
<evidence type="ECO:0000250" key="1"/>
<evidence type="ECO:0000250" key="2">
    <source>
        <dbReference type="UniProtKB" id="B6D434"/>
    </source>
</evidence>
<evidence type="ECO:0000255" key="3"/>
<evidence type="ECO:0000256" key="4">
    <source>
        <dbReference type="SAM" id="MobiDB-lite"/>
    </source>
</evidence>
<evidence type="ECO:0000269" key="5">
    <source>
    </source>
</evidence>
<evidence type="ECO:0000303" key="6">
    <source>
    </source>
</evidence>
<evidence type="ECO:0000303" key="7">
    <source>
    </source>
</evidence>
<evidence type="ECO:0000305" key="8"/>
<evidence type="ECO:0000305" key="9">
    <source>
    </source>
</evidence>
<evidence type="ECO:0000305" key="10">
    <source>
    </source>
</evidence>
<reference key="1">
    <citation type="journal article" date="2008" name="Peptides">
        <title>Identification and characterization of novel reptile cathelicidins from elapid snakes.</title>
        <authorList>
            <person name="Zhao H."/>
            <person name="Gan T.-X."/>
            <person name="Liu X.-D."/>
            <person name="Jin Y."/>
            <person name="Lee W.-H."/>
            <person name="Shen J.-H."/>
            <person name="Zhang Y."/>
        </authorList>
    </citation>
    <scope>NUCLEOTIDE SEQUENCE [MRNA]</scope>
    <scope>SYNTHESIS OF 158-191</scope>
    <scope>FUNCTION</scope>
    <source>
        <tissue>Venom gland</tissue>
    </source>
</reference>
<reference key="2">
    <citation type="journal article" date="2014" name="Amino Acids">
        <title>Vipericidins: a novel family of cathelicidin-related peptides from the venom gland of South American pit vipers.</title>
        <authorList>
            <person name="Falcao C.B."/>
            <person name="de La Torre B.G."/>
            <person name="Perez-Peinado C."/>
            <person name="Barron A.E."/>
            <person name="Andreu D."/>
            <person name="Radis-Baptista G."/>
        </authorList>
    </citation>
    <scope>SYNTHESIS OF 158-191</scope>
    <scope>FUNCTION</scope>
</reference>
<feature type="signal peptide" evidence="3">
    <location>
        <begin position="1"/>
        <end position="22"/>
    </location>
</feature>
<feature type="propeptide" id="PRO_0000410958" evidence="9">
    <location>
        <begin position="23"/>
        <end position="161"/>
    </location>
</feature>
<feature type="peptide" id="PRO_0000410959" description="Cathelicidin-related peptide Oh-Cath" evidence="9">
    <location>
        <begin position="162"/>
        <end position="191"/>
    </location>
</feature>
<feature type="region of interest" description="Disordered" evidence="4">
    <location>
        <begin position="125"/>
        <end position="154"/>
    </location>
</feature>
<feature type="compositionally biased region" description="Acidic residues" evidence="4">
    <location>
        <begin position="125"/>
        <end position="151"/>
    </location>
</feature>
<feature type="disulfide bond" evidence="1">
    <location>
        <begin position="81"/>
        <end position="92"/>
    </location>
</feature>
<feature type="disulfide bond" evidence="1">
    <location>
        <begin position="103"/>
        <end position="120"/>
    </location>
</feature>
<sequence>MEGFFWKTLLVVGALAIGGTSSLPHKPLTYEEAVDLAVSIYNSKSGEDSLYRLLEAVPPPEWDPLSESNQELNFTIKETVCLVAEERSLEECDFQEDGAIMGCTGYYFFGESPPVLVLTCKPVGEEEEQKQEEGNEEEKEVEKEEKEEDEKDQPRRVKRFKKFFKKLKNSVKKRAKKFFKKPRVIGVSIPF</sequence>
<accession>B6S2X2</accession>
<comment type="function">
    <text evidence="2 5">Potent antimicrobial peptide against Gram-negative (MIC=0.25 ug/ml against E.coli ATCC 25922, MIC=0.5 ug/ml against P.aeruginosa) and Gram-positive bacteria (MIC=64 ug/ml against E.faecalis, MIC=64 ug/ml against S.aureus) (PubMed:25100358). Adopts an amphipathic alpha helical conformation, that may allow to partition into the target membrane (By similarity). Low hemolytic activities have been observed on mammalian cells (PubMed:25100358).</text>
</comment>
<comment type="subcellular location">
    <subcellularLocation>
        <location evidence="2">Secreted</location>
    </subcellularLocation>
    <subcellularLocation>
        <location evidence="8">Target cell membrane</location>
    </subcellularLocation>
    <text evidence="8">Forms a helical membrane channel in the prey.</text>
</comment>
<comment type="tissue specificity">
    <text evidence="8">Expressed by the venom gland.</text>
</comment>
<comment type="miscellaneous">
    <text evidence="9">The peptide length (30 residues) shown here is propagated from the directly sequenced mature cathelicidin-BF. A longer peptide (34 residues) with predicted cleavage site located at position Val-157-158-Lys is proposed in PubMed:18620012. This 30 residues peptide could result from a further processing.</text>
</comment>
<comment type="miscellaneous">
    <text evidence="10">The putative mature sequence has been predicted by AMPA, a predictive algorithm for identification of peptide stretches with antimicrobial properties.</text>
</comment>
<comment type="similarity">
    <text evidence="8">Belongs to the cathelicidin family.</text>
</comment>
<keyword id="KW-0044">Antibiotic</keyword>
<keyword id="KW-0929">Antimicrobial</keyword>
<keyword id="KW-0165">Cleavage on pair of basic residues</keyword>
<keyword id="KW-1015">Disulfide bond</keyword>
<keyword id="KW-0472">Membrane</keyword>
<keyword id="KW-0964">Secreted</keyword>
<keyword id="KW-0732">Signal</keyword>
<keyword id="KW-1052">Target cell membrane</keyword>
<keyword id="KW-1053">Target membrane</keyword>
<proteinExistence type="evidence at transcript level"/>